<protein>
    <recommendedName>
        <fullName>Uncharacterized PPE family protein PPE33</fullName>
    </recommendedName>
</protein>
<sequence>MDFGLQPPEITSGEMYLGPGAGPMLAAAVAWDGLAAELQSMAASYASIVEGMASESWLGPSSAGMAAAAAPYVTWMSGTSAQAKAAADQARAAVVAYETAFAAVVPPPQIAANRSQLISLVATNIFGQNTAAIAATEAEYGEMWAQDTMAMFGYASSSATASRLTPFTAPPQTTNPSGLAGQAAATGQATALASGTNAVTTALSSAAAQFPFDIIPTLLQGLATLSTQYTQLMGQLINAIFGPTGATTYQNVFVTAANVTKFSTWANDAMSAPNLGMTEFKVFWQPPPAPEIPKSSLGAGLGLRSGLSAGLAHAASAGLGQANLVGDLSVPPSWASATPAVRLVANTLPATSLAAAPATQIPANLLGQMALGSMTGGALGAAAPAIYTGSGARARANGGTPSAEPVKLEAVIAQLQKQPDAVRHWNVDKADLDGLLDRLSKQPGIHAVHVSNGDKPKVALPDTQLGSH</sequence>
<proteinExistence type="evidence at protein level"/>
<evidence type="ECO:0000256" key="1">
    <source>
        <dbReference type="SAM" id="MobiDB-lite"/>
    </source>
</evidence>
<evidence type="ECO:0000269" key="2">
    <source>
    </source>
</evidence>
<evidence type="ECO:0000303" key="3">
    <source>
    </source>
</evidence>
<evidence type="ECO:0000305" key="4"/>
<name>PPE33_MYCTU</name>
<dbReference type="EMBL" id="AL123456">
    <property type="protein sequence ID" value="CCP44575.1"/>
    <property type="molecule type" value="Genomic_DNA"/>
</dbReference>
<dbReference type="PIR" id="B70932">
    <property type="entry name" value="B70932"/>
</dbReference>
<dbReference type="RefSeq" id="WP_003911666.1">
    <property type="nucleotide sequence ID" value="NZ_NVQJ01000070.1"/>
</dbReference>
<dbReference type="RefSeq" id="YP_177845.1">
    <property type="nucleotide sequence ID" value="NC_000962.3"/>
</dbReference>
<dbReference type="SMR" id="P9WI03"/>
<dbReference type="STRING" id="83332.Rv1809"/>
<dbReference type="PaxDb" id="83332-Rv1809"/>
<dbReference type="DNASU" id="885555"/>
<dbReference type="GeneID" id="885555"/>
<dbReference type="KEGG" id="mtu:Rv1809"/>
<dbReference type="KEGG" id="mtv:RVBD_1809"/>
<dbReference type="TubercuList" id="Rv1809"/>
<dbReference type="eggNOG" id="COG5651">
    <property type="taxonomic scope" value="Bacteria"/>
</dbReference>
<dbReference type="InParanoid" id="P9WI03"/>
<dbReference type="OrthoDB" id="4751845at2"/>
<dbReference type="PhylomeDB" id="P9WI03"/>
<dbReference type="Proteomes" id="UP000001584">
    <property type="component" value="Chromosome"/>
</dbReference>
<dbReference type="GO" id="GO:0010961">
    <property type="term" value="P:intracellular magnesium ion homeostasis"/>
    <property type="evidence" value="ECO:0000316"/>
    <property type="project" value="UniProtKB"/>
</dbReference>
<dbReference type="GO" id="GO:1903830">
    <property type="term" value="P:magnesium ion transmembrane transport"/>
    <property type="evidence" value="ECO:0000316"/>
    <property type="project" value="UniProtKB"/>
</dbReference>
<dbReference type="GO" id="GO:0052572">
    <property type="term" value="P:response to host immune response"/>
    <property type="evidence" value="ECO:0000318"/>
    <property type="project" value="GO_Central"/>
</dbReference>
<dbReference type="FunFam" id="1.20.1260.20:FF:000001">
    <property type="entry name" value="PPE family protein PPE41"/>
    <property type="match status" value="1"/>
</dbReference>
<dbReference type="Gene3D" id="1.20.1260.20">
    <property type="entry name" value="PPE superfamily"/>
    <property type="match status" value="1"/>
</dbReference>
<dbReference type="InterPro" id="IPR022171">
    <property type="entry name" value="PPE_C"/>
</dbReference>
<dbReference type="InterPro" id="IPR000030">
    <property type="entry name" value="PPE_dom"/>
</dbReference>
<dbReference type="InterPro" id="IPR038332">
    <property type="entry name" value="PPE_sf"/>
</dbReference>
<dbReference type="PANTHER" id="PTHR46766">
    <property type="entry name" value="GLUTAMINE-RICH PROTEIN 2"/>
    <property type="match status" value="1"/>
</dbReference>
<dbReference type="PANTHER" id="PTHR46766:SF1">
    <property type="entry name" value="GLUTAMINE-RICH PROTEIN 2"/>
    <property type="match status" value="1"/>
</dbReference>
<dbReference type="Pfam" id="PF00823">
    <property type="entry name" value="PPE"/>
    <property type="match status" value="1"/>
</dbReference>
<dbReference type="Pfam" id="PF12484">
    <property type="entry name" value="PPE-SVP"/>
    <property type="match status" value="1"/>
</dbReference>
<dbReference type="SUPFAM" id="SSF140459">
    <property type="entry name" value="PE/PPE dimer-like"/>
    <property type="match status" value="1"/>
</dbReference>
<feature type="chain" id="PRO_0000379589" description="Uncharacterized PPE family protein PPE33">
    <location>
        <begin position="1"/>
        <end position="468"/>
    </location>
</feature>
<feature type="region of interest" description="Disordered" evidence="1">
    <location>
        <begin position="447"/>
        <end position="468"/>
    </location>
</feature>
<organism>
    <name type="scientific">Mycobacterium tuberculosis (strain ATCC 25618 / H37Rv)</name>
    <dbReference type="NCBI Taxonomy" id="83332"/>
    <lineage>
        <taxon>Bacteria</taxon>
        <taxon>Bacillati</taxon>
        <taxon>Actinomycetota</taxon>
        <taxon>Actinomycetes</taxon>
        <taxon>Mycobacteriales</taxon>
        <taxon>Mycobacteriaceae</taxon>
        <taxon>Mycobacterium</taxon>
        <taxon>Mycobacterium tuberculosis complex</taxon>
    </lineage>
</organism>
<accession>P9WI03</accession>
<accession>L0TAG3</accession>
<accession>Q79FJ5</accession>
<accession>Q8VJW0</accession>
<gene>
    <name type="primary">PPE33</name>
    <name type="ordered locus">Rv1809</name>
</gene>
<reference key="1">
    <citation type="journal article" date="1998" name="Nature">
        <title>Deciphering the biology of Mycobacterium tuberculosis from the complete genome sequence.</title>
        <authorList>
            <person name="Cole S.T."/>
            <person name="Brosch R."/>
            <person name="Parkhill J."/>
            <person name="Garnier T."/>
            <person name="Churcher C.M."/>
            <person name="Harris D.E."/>
            <person name="Gordon S.V."/>
            <person name="Eiglmeier K."/>
            <person name="Gas S."/>
            <person name="Barry C.E. III"/>
            <person name="Tekaia F."/>
            <person name="Badcock K."/>
            <person name="Basham D."/>
            <person name="Brown D."/>
            <person name="Chillingworth T."/>
            <person name="Connor R."/>
            <person name="Davies R.M."/>
            <person name="Devlin K."/>
            <person name="Feltwell T."/>
            <person name="Gentles S."/>
            <person name="Hamlin N."/>
            <person name="Holroyd S."/>
            <person name="Hornsby T."/>
            <person name="Jagels K."/>
            <person name="Krogh A."/>
            <person name="McLean J."/>
            <person name="Moule S."/>
            <person name="Murphy L.D."/>
            <person name="Oliver S."/>
            <person name="Osborne J."/>
            <person name="Quail M.A."/>
            <person name="Rajandream M.A."/>
            <person name="Rogers J."/>
            <person name="Rutter S."/>
            <person name="Seeger K."/>
            <person name="Skelton S."/>
            <person name="Squares S."/>
            <person name="Squares R."/>
            <person name="Sulston J.E."/>
            <person name="Taylor K."/>
            <person name="Whitehead S."/>
            <person name="Barrell B.G."/>
        </authorList>
    </citation>
    <scope>NUCLEOTIDE SEQUENCE [LARGE SCALE GENOMIC DNA]</scope>
    <source>
        <strain>ATCC 25618 / H37Rv</strain>
    </source>
</reference>
<reference key="2">
    <citation type="journal article" date="2011" name="Mol. Cell. Proteomics">
        <title>Proteogenomic analysis of Mycobacterium tuberculosis by high resolution mass spectrometry.</title>
        <authorList>
            <person name="Kelkar D.S."/>
            <person name="Kumar D."/>
            <person name="Kumar P."/>
            <person name="Balakrishnan L."/>
            <person name="Muthusamy B."/>
            <person name="Yadav A.K."/>
            <person name="Shrivastava P."/>
            <person name="Marimuthu A."/>
            <person name="Anand S."/>
            <person name="Sundaram H."/>
            <person name="Kingsbury R."/>
            <person name="Harsha H.C."/>
            <person name="Nair B."/>
            <person name="Prasad T.S."/>
            <person name="Chauhan D.S."/>
            <person name="Katoch K."/>
            <person name="Katoch V.M."/>
            <person name="Kumar P."/>
            <person name="Chaerkady R."/>
            <person name="Ramachandran S."/>
            <person name="Dash D."/>
            <person name="Pandey A."/>
        </authorList>
    </citation>
    <scope>IDENTIFICATION BY MASS SPECTROMETRY [LARGE SCALE ANALYSIS]</scope>
    <source>
        <strain>ATCC 25618 / H37Rv</strain>
    </source>
</reference>
<reference key="3">
    <citation type="journal article" date="2020" name="Science">
        <title>PE/PPE proteins mediate nutrient transport across the outer membrane of Mycobacterium tuberculosis.</title>
        <authorList>
            <person name="Wang Q."/>
            <person name="Boshoff H.I.M."/>
            <person name="Harrison J.R."/>
            <person name="Ray P.C."/>
            <person name="Green S.R."/>
            <person name="Wyatt P.G."/>
            <person name="Barry C.E. III"/>
        </authorList>
    </citation>
    <scope>DISRUPTION PHENOTYPE</scope>
    <source>
        <strain evidence="3">ATCC 27294 / TMC 102 / H37Rv</strain>
    </source>
</reference>
<keyword id="KW-1185">Reference proteome</keyword>
<comment type="disruption phenotype">
    <text evidence="2">Cell envelope-associated glycolipid phthiocerol dimycocerosate (PDIM)-positive mutants with simultaneous deletion of PPE31/PPE32/PPE33 genes have a growth defect in Mg(2+) restricted media, particularly at mildly acidic pH, but the PDIM-negative mutants grow normally.</text>
</comment>
<comment type="similarity">
    <text evidence="4">Belongs to the mycobacterial PPE family.</text>
</comment>